<comment type="function">
    <text evidence="3">Functions in the biosynthesis of archaeosine, a modified nucleoside present in the dihydrouridine loop (D-loop) of archaeal tRNAs. Catalyzes the addition of L-lysine to the cyano group of 7-cyano-7-deazaguanine (preQ0)-modified tRNAs at position 15, to generate q0kN15-tRNA, a q0N lysine adduct identified as 7-N-[(5S)-5-amino-5-carboxypentyl]formamidino-7-deazaguanosine.</text>
</comment>
<comment type="catalytic activity">
    <reaction evidence="3">
        <text>7-cyano-7-carbaguanosine(15) in tRNA + L-lysine = 7-N-[(5S)-5-amino-5-carboxypentyl]formamidino-7-deazaguanosine(15) in tRNA</text>
        <dbReference type="Rhea" id="RHEA:63216"/>
        <dbReference type="Rhea" id="RHEA-COMP:10371"/>
        <dbReference type="Rhea" id="RHEA-COMP:16288"/>
        <dbReference type="ChEBI" id="CHEBI:32551"/>
        <dbReference type="ChEBI" id="CHEBI:82850"/>
        <dbReference type="ChEBI" id="CHEBI:145542"/>
    </reaction>
    <physiologicalReaction direction="left-to-right" evidence="3">
        <dbReference type="Rhea" id="RHEA:63217"/>
    </physiologicalReaction>
</comment>
<comment type="pathway">
    <text evidence="3">tRNA modification; archaeosine-tRNA biosynthesis.</text>
</comment>
<comment type="subunit">
    <text evidence="1 3">Forms a robust complex with the archaeosine synthase beta subunit RaSEA. Formation of this complex highly increases lysine transfer activity (PubMed:31740832). The complex likely consists of an alpha(2)beta(2) heterotetrameric structure (By similarity).</text>
</comment>
<comment type="similarity">
    <text evidence="5">Belongs to the archaeosine synthase type 1 family.</text>
</comment>
<sequence>MTQYFEIENRDGAARIGKLLLFPEIRTPCALHTAALGDLENPGPIVDAGSLWIADQKELEARIKEIREKTGKGTLIILPHQTYPPAVPAESTGKVEAFTATGDENAEAEGPTGSLLRAEGEVRKSDLYIMEGAGTLENNARRFLETLIDLKNRIPPDTALYAPKLALPENAAMLAYVGIDVMDDTRAEIAAYSDIYLTAAGSFYLDSLVEFPCRCRVCAATTPAELRALPKADRVELLSAHNRDALDAELALVREKIRTGNLREYVEGQCRVRPWLTALLRLGDFEYSYIEEKVPAFRQSQLLADTSEALSRIEVVRFARRIQERYAPPDLDVLLLLPCAARKPYSTSQSHQKFILALGKYRKFVHEVIITSPLGIVPRELELTYPAAHYDTAVTGHWDEEEKAWVSGCLESYLSKHMYKAVVAHVEGAYREICERVAEKLGIDVVYTAGESLASYESLTNLKNTVEAICTSKDFSRKSQNAEKEKKNFIKAVAGYQFGEGAGHLFSEEVGDPLVKGRFPKYQLFAGKKQLATLIPQYGMLALSPEGAELVLKSEKYVVKIDDFVPRGSILAPGVLDAGPEIRPNDEVIVLGKKALCVGRAMMSGREMKESGRGVAVDVRHVKKL</sequence>
<feature type="chain" id="PRO_0000450069" description="Archaeosine synthase subunit alpha">
    <location>
        <begin position="1"/>
        <end position="625"/>
    </location>
</feature>
<feature type="domain" description="PUA" evidence="2">
    <location>
        <begin position="556"/>
        <end position="624"/>
    </location>
</feature>
<gene>
    <name evidence="4" type="primary">arcS</name>
    <name evidence="6" type="synonym">tgt</name>
    <name evidence="6" type="ordered locus">MA_4632</name>
</gene>
<proteinExistence type="evidence at protein level"/>
<keyword id="KW-0456">Lyase</keyword>
<keyword id="KW-1185">Reference proteome</keyword>
<keyword id="KW-0819">tRNA processing</keyword>
<evidence type="ECO:0000250" key="1">
    <source>
        <dbReference type="UniProtKB" id="Q5JHG7"/>
    </source>
</evidence>
<evidence type="ECO:0000255" key="2">
    <source>
        <dbReference type="PROSITE-ProRule" id="PRU00161"/>
    </source>
</evidence>
<evidence type="ECO:0000269" key="3">
    <source>
    </source>
</evidence>
<evidence type="ECO:0000303" key="4">
    <source>
    </source>
</evidence>
<evidence type="ECO:0000305" key="5"/>
<evidence type="ECO:0000312" key="6">
    <source>
        <dbReference type="EMBL" id="AAM07966.1"/>
    </source>
</evidence>
<organism>
    <name type="scientific">Methanosarcina acetivorans (strain ATCC 35395 / DSM 2834 / JCM 12185 / C2A)</name>
    <dbReference type="NCBI Taxonomy" id="188937"/>
    <lineage>
        <taxon>Archaea</taxon>
        <taxon>Methanobacteriati</taxon>
        <taxon>Methanobacteriota</taxon>
        <taxon>Stenosarchaea group</taxon>
        <taxon>Methanomicrobia</taxon>
        <taxon>Methanosarcinales</taxon>
        <taxon>Methanosarcinaceae</taxon>
        <taxon>Methanosarcina</taxon>
    </lineage>
</organism>
<accession>Q8TH90</accession>
<protein>
    <recommendedName>
        <fullName evidence="4">Archaeosine synthase subunit alpha</fullName>
        <ecNumber evidence="3">4.3.3.-</ecNumber>
    </recommendedName>
    <alternativeName>
        <fullName evidence="4">Archaeosine synthase, lysine transferase subunit</fullName>
    </alternativeName>
</protein>
<name>ARCSA_METAC</name>
<dbReference type="EC" id="4.3.3.-" evidence="3"/>
<dbReference type="EMBL" id="AE010299">
    <property type="protein sequence ID" value="AAM07966.1"/>
    <property type="molecule type" value="Genomic_DNA"/>
</dbReference>
<dbReference type="RefSeq" id="WP_011024500.1">
    <property type="nucleotide sequence ID" value="NC_003552.1"/>
</dbReference>
<dbReference type="SMR" id="Q8TH90"/>
<dbReference type="FunCoup" id="Q8TH90">
    <property type="interactions" value="6"/>
</dbReference>
<dbReference type="STRING" id="188937.MA_4632"/>
<dbReference type="EnsemblBacteria" id="AAM07966">
    <property type="protein sequence ID" value="AAM07966"/>
    <property type="gene ID" value="MA_4632"/>
</dbReference>
<dbReference type="GeneID" id="1476526"/>
<dbReference type="KEGG" id="mac:MA_4632"/>
<dbReference type="HOGENOM" id="CLU_029831_0_0_2"/>
<dbReference type="InParanoid" id="Q8TH90"/>
<dbReference type="OrthoDB" id="115061at2157"/>
<dbReference type="PhylomeDB" id="Q8TH90"/>
<dbReference type="BRENDA" id="2.6.1.97">
    <property type="organism ID" value="7224"/>
</dbReference>
<dbReference type="UniPathway" id="UPA00393"/>
<dbReference type="Proteomes" id="UP000002487">
    <property type="component" value="Chromosome"/>
</dbReference>
<dbReference type="GO" id="GO:0005737">
    <property type="term" value="C:cytoplasm"/>
    <property type="evidence" value="ECO:0000318"/>
    <property type="project" value="GO_Central"/>
</dbReference>
<dbReference type="GO" id="GO:0016829">
    <property type="term" value="F:lyase activity"/>
    <property type="evidence" value="ECO:0007669"/>
    <property type="project" value="UniProtKB-KW"/>
</dbReference>
<dbReference type="GO" id="GO:0003723">
    <property type="term" value="F:RNA binding"/>
    <property type="evidence" value="ECO:0007669"/>
    <property type="project" value="InterPro"/>
</dbReference>
<dbReference type="GO" id="GO:0002099">
    <property type="term" value="P:tRNA wobble guanine modification"/>
    <property type="evidence" value="ECO:0000318"/>
    <property type="project" value="GO_Central"/>
</dbReference>
<dbReference type="CDD" id="cd21149">
    <property type="entry name" value="PUA_archaeosine_TGT"/>
    <property type="match status" value="1"/>
</dbReference>
<dbReference type="Gene3D" id="3.10.450.90">
    <property type="entry name" value="ArcTGT, C2 domain"/>
    <property type="match status" value="1"/>
</dbReference>
<dbReference type="Gene3D" id="2.30.130.10">
    <property type="entry name" value="PUA domain"/>
    <property type="match status" value="1"/>
</dbReference>
<dbReference type="Gene3D" id="3.20.20.105">
    <property type="entry name" value="Queuine tRNA-ribosyltransferase-like"/>
    <property type="match status" value="1"/>
</dbReference>
<dbReference type="Gene3D" id="3.40.50.10630">
    <property type="entry name" value="Uracil-DNA glycosylase-like"/>
    <property type="match status" value="1"/>
</dbReference>
<dbReference type="InterPro" id="IPR053418">
    <property type="entry name" value="Archaeosine_synthase_1"/>
</dbReference>
<dbReference type="InterPro" id="IPR050076">
    <property type="entry name" value="ArchSynthase1/Queuine_TRR"/>
</dbReference>
<dbReference type="InterPro" id="IPR040777">
    <property type="entry name" value="DUF5591"/>
</dbReference>
<dbReference type="InterPro" id="IPR002478">
    <property type="entry name" value="PUA"/>
</dbReference>
<dbReference type="InterPro" id="IPR015947">
    <property type="entry name" value="PUA-like_sf"/>
</dbReference>
<dbReference type="InterPro" id="IPR036974">
    <property type="entry name" value="PUA_sf"/>
</dbReference>
<dbReference type="InterPro" id="IPR036511">
    <property type="entry name" value="TGT-like_sf"/>
</dbReference>
<dbReference type="InterPro" id="IPR029402">
    <property type="entry name" value="TGT_C2"/>
</dbReference>
<dbReference type="InterPro" id="IPR038250">
    <property type="entry name" value="TGT_C2_sf"/>
</dbReference>
<dbReference type="InterPro" id="IPR002616">
    <property type="entry name" value="tRNA_ribo_trans-like"/>
</dbReference>
<dbReference type="InterPro" id="IPR004521">
    <property type="entry name" value="Uncharacterised_CHP00451"/>
</dbReference>
<dbReference type="InterPro" id="IPR036895">
    <property type="entry name" value="Uracil-DNA_glycosylase-like_sf"/>
</dbReference>
<dbReference type="NCBIfam" id="NF040592">
    <property type="entry name" value="tRNA_mod_ArcS"/>
    <property type="match status" value="1"/>
</dbReference>
<dbReference type="NCBIfam" id="TIGR00451">
    <property type="entry name" value="unchar_dom_2"/>
    <property type="match status" value="1"/>
</dbReference>
<dbReference type="PANTHER" id="PTHR46499:SF2">
    <property type="entry name" value="ARCHAEOSINE SYNTHASE"/>
    <property type="match status" value="1"/>
</dbReference>
<dbReference type="PANTHER" id="PTHR46499">
    <property type="entry name" value="QUEUINE TRNA-RIBOSYLTRANSFERASE"/>
    <property type="match status" value="1"/>
</dbReference>
<dbReference type="Pfam" id="PF17884">
    <property type="entry name" value="DUF5591"/>
    <property type="match status" value="1"/>
</dbReference>
<dbReference type="Pfam" id="PF01472">
    <property type="entry name" value="PUA"/>
    <property type="match status" value="1"/>
</dbReference>
<dbReference type="Pfam" id="PF01702">
    <property type="entry name" value="TGT"/>
    <property type="match status" value="1"/>
</dbReference>
<dbReference type="Pfam" id="PF14810">
    <property type="entry name" value="TGT_C2"/>
    <property type="match status" value="1"/>
</dbReference>
<dbReference type="SMART" id="SM00359">
    <property type="entry name" value="PUA"/>
    <property type="match status" value="1"/>
</dbReference>
<dbReference type="SUPFAM" id="SSF88802">
    <property type="entry name" value="Pre-PUA domain"/>
    <property type="match status" value="1"/>
</dbReference>
<dbReference type="SUPFAM" id="SSF88697">
    <property type="entry name" value="PUA domain-like"/>
    <property type="match status" value="1"/>
</dbReference>
<dbReference type="SUPFAM" id="SSF51713">
    <property type="entry name" value="tRNA-guanine transglycosylase"/>
    <property type="match status" value="1"/>
</dbReference>
<dbReference type="SUPFAM" id="SSF52141">
    <property type="entry name" value="Uracil-DNA glycosylase-like"/>
    <property type="match status" value="1"/>
</dbReference>
<dbReference type="PROSITE" id="PS50890">
    <property type="entry name" value="PUA"/>
    <property type="match status" value="1"/>
</dbReference>
<reference key="1">
    <citation type="journal article" date="2002" name="Genome Res.">
        <title>The genome of Methanosarcina acetivorans reveals extensive metabolic and physiological diversity.</title>
        <authorList>
            <person name="Galagan J.E."/>
            <person name="Nusbaum C."/>
            <person name="Roy A."/>
            <person name="Endrizzi M.G."/>
            <person name="Macdonald P."/>
            <person name="FitzHugh W."/>
            <person name="Calvo S."/>
            <person name="Engels R."/>
            <person name="Smirnov S."/>
            <person name="Atnoor D."/>
            <person name="Brown A."/>
            <person name="Allen N."/>
            <person name="Naylor J."/>
            <person name="Stange-Thomann N."/>
            <person name="DeArellano K."/>
            <person name="Johnson R."/>
            <person name="Linton L."/>
            <person name="McEwan P."/>
            <person name="McKernan K."/>
            <person name="Talamas J."/>
            <person name="Tirrell A."/>
            <person name="Ye W."/>
            <person name="Zimmer A."/>
            <person name="Barber R.D."/>
            <person name="Cann I."/>
            <person name="Graham D.E."/>
            <person name="Grahame D.A."/>
            <person name="Guss A.M."/>
            <person name="Hedderich R."/>
            <person name="Ingram-Smith C."/>
            <person name="Kuettner H.C."/>
            <person name="Krzycki J.A."/>
            <person name="Leigh J.A."/>
            <person name="Li W."/>
            <person name="Liu J."/>
            <person name="Mukhopadhyay B."/>
            <person name="Reeve J.N."/>
            <person name="Smith K."/>
            <person name="Springer T.A."/>
            <person name="Umayam L.A."/>
            <person name="White O."/>
            <person name="White R.H."/>
            <person name="de Macario E.C."/>
            <person name="Ferry J.G."/>
            <person name="Jarrell K.F."/>
            <person name="Jing H."/>
            <person name="Macario A.J.L."/>
            <person name="Paulsen I.T."/>
            <person name="Pritchett M."/>
            <person name="Sowers K.R."/>
            <person name="Swanson R.V."/>
            <person name="Zinder S.H."/>
            <person name="Lander E."/>
            <person name="Metcalf W.W."/>
            <person name="Birren B."/>
        </authorList>
    </citation>
    <scope>NUCLEOTIDE SEQUENCE [LARGE SCALE GENOMIC DNA]</scope>
    <source>
        <strain>ATCC 35395 / DSM 2834 / JCM 12185 / C2A</strain>
    </source>
</reference>
<reference key="2">
    <citation type="journal article" date="2019" name="Nat. Chem. Biol.">
        <title>Identification of a radical SAM enzyme involved in the synthesis of archaeosine.</title>
        <authorList>
            <person name="Yokogawa T."/>
            <person name="Nomura Y."/>
            <person name="Yasuda A."/>
            <person name="Ogino H."/>
            <person name="Hiura K."/>
            <person name="Nakada S."/>
            <person name="Oka N."/>
            <person name="Ando K."/>
            <person name="Kawamura T."/>
            <person name="Hirata A."/>
            <person name="Hori H."/>
            <person name="Ohno S."/>
        </authorList>
    </citation>
    <scope>FUNCTION</scope>
    <scope>CATALYTIC ACTIVITY</scope>
    <scope>PATHWAY</scope>
    <scope>INTERACTION WITH RASEA</scope>
</reference>